<keyword id="KW-0967">Endosome</keyword>
<keyword id="KW-0472">Membrane</keyword>
<keyword id="KW-1185">Reference proteome</keyword>
<keyword id="KW-0812">Transmembrane</keyword>
<keyword id="KW-1133">Transmembrane helix</keyword>
<keyword id="KW-0813">Transport</keyword>
<protein>
    <recommendedName>
        <fullName>PRA1 family protein B2</fullName>
        <shortName>AtPRA1.B2</shortName>
    </recommendedName>
</protein>
<organism>
    <name type="scientific">Arabidopsis thaliana</name>
    <name type="common">Mouse-ear cress</name>
    <dbReference type="NCBI Taxonomy" id="3702"/>
    <lineage>
        <taxon>Eukaryota</taxon>
        <taxon>Viridiplantae</taxon>
        <taxon>Streptophyta</taxon>
        <taxon>Embryophyta</taxon>
        <taxon>Tracheophyta</taxon>
        <taxon>Spermatophyta</taxon>
        <taxon>Magnoliopsida</taxon>
        <taxon>eudicotyledons</taxon>
        <taxon>Gunneridae</taxon>
        <taxon>Pentapetalae</taxon>
        <taxon>rosids</taxon>
        <taxon>malvids</taxon>
        <taxon>Brassicales</taxon>
        <taxon>Brassicaceae</taxon>
        <taxon>Camelineae</taxon>
        <taxon>Arabidopsis</taxon>
    </lineage>
</organism>
<name>PR1B2_ARATH</name>
<gene>
    <name type="primary">PRA1B2</name>
    <name type="ordered locus">At2g40380</name>
    <name type="ORF">T3G21.15</name>
</gene>
<comment type="function">
    <text evidence="1">May be involved in both secretory and endocytic intracellular trafficking in the endosomal/prevacuolar compartments.</text>
</comment>
<comment type="subunit">
    <text evidence="4">Interacts with PRA1B1, PRA1B3, PRA1B4, PRA1B5, PRA1B6 and PRA1E.</text>
</comment>
<comment type="interaction">
    <interactant intactId="EBI-4426093">
        <id>Q9SIY7</id>
    </interactant>
    <interactant intactId="EBI-4430098">
        <id>Q9M012</id>
        <label>PRA1B5</label>
    </interactant>
    <organismsDiffer>false</organismsDiffer>
    <experiments>4</experiments>
</comment>
<comment type="subcellular location">
    <subcellularLocation>
        <location evidence="4">Endosome membrane</location>
        <topology evidence="4">Multi-pass membrane protein</topology>
    </subcellularLocation>
</comment>
<comment type="similarity">
    <text evidence="5">Belongs to the PRA1 family.</text>
</comment>
<dbReference type="EMBL" id="AC007020">
    <property type="protein sequence ID" value="AAD25672.1"/>
    <property type="molecule type" value="Genomic_DNA"/>
</dbReference>
<dbReference type="EMBL" id="CP002685">
    <property type="protein sequence ID" value="AEC09820.1"/>
    <property type="molecule type" value="Genomic_DNA"/>
</dbReference>
<dbReference type="EMBL" id="BT010639">
    <property type="protein sequence ID" value="AAQ89661.1"/>
    <property type="molecule type" value="mRNA"/>
</dbReference>
<dbReference type="EMBL" id="AK175728">
    <property type="protein sequence ID" value="BAD43491.1"/>
    <property type="molecule type" value="mRNA"/>
</dbReference>
<dbReference type="EMBL" id="AK176230">
    <property type="protein sequence ID" value="BAD43993.1"/>
    <property type="molecule type" value="mRNA"/>
</dbReference>
<dbReference type="PIR" id="G84828">
    <property type="entry name" value="G84828"/>
</dbReference>
<dbReference type="BioGRID" id="3969">
    <property type="interactions" value="20"/>
</dbReference>
<dbReference type="FunCoup" id="Q9SIY7">
    <property type="interactions" value="2307"/>
</dbReference>
<dbReference type="IntAct" id="Q9SIY7">
    <property type="interactions" value="19"/>
</dbReference>
<dbReference type="STRING" id="3702.Q9SIY7"/>
<dbReference type="PaxDb" id="3702-AT2G40380.1"/>
<dbReference type="ProteomicsDB" id="234874"/>
<dbReference type="EnsemblPlants" id="AT2G40380.1">
    <property type="protein sequence ID" value="AT2G40380.1"/>
    <property type="gene ID" value="AT2G40380"/>
</dbReference>
<dbReference type="GeneID" id="818631"/>
<dbReference type="Gramene" id="AT2G40380.1">
    <property type="protein sequence ID" value="AT2G40380.1"/>
    <property type="gene ID" value="AT2G40380"/>
</dbReference>
<dbReference type="KEGG" id="ath:AT2G40380"/>
<dbReference type="Araport" id="AT2G40380"/>
<dbReference type="TAIR" id="AT2G40380">
    <property type="gene designation" value="PRA1.B2"/>
</dbReference>
<dbReference type="eggNOG" id="KOG3142">
    <property type="taxonomic scope" value="Eukaryota"/>
</dbReference>
<dbReference type="HOGENOM" id="CLU_060198_1_0_1"/>
<dbReference type="InParanoid" id="Q9SIY7"/>
<dbReference type="OMA" id="LGSWMFL"/>
<dbReference type="OrthoDB" id="63113at2759"/>
<dbReference type="PhylomeDB" id="Q9SIY7"/>
<dbReference type="PRO" id="PR:Q9SIY7"/>
<dbReference type="Proteomes" id="UP000006548">
    <property type="component" value="Chromosome 2"/>
</dbReference>
<dbReference type="ExpressionAtlas" id="Q9SIY7">
    <property type="expression patterns" value="baseline and differential"/>
</dbReference>
<dbReference type="GO" id="GO:0005783">
    <property type="term" value="C:endoplasmic reticulum"/>
    <property type="evidence" value="ECO:0000314"/>
    <property type="project" value="TAIR"/>
</dbReference>
<dbReference type="GO" id="GO:0005768">
    <property type="term" value="C:endosome"/>
    <property type="evidence" value="ECO:0007005"/>
    <property type="project" value="TAIR"/>
</dbReference>
<dbReference type="GO" id="GO:0010008">
    <property type="term" value="C:endosome membrane"/>
    <property type="evidence" value="ECO:0007669"/>
    <property type="project" value="UniProtKB-SubCell"/>
</dbReference>
<dbReference type="GO" id="GO:0005794">
    <property type="term" value="C:Golgi apparatus"/>
    <property type="evidence" value="ECO:0007005"/>
    <property type="project" value="TAIR"/>
</dbReference>
<dbReference type="GO" id="GO:0000138">
    <property type="term" value="C:Golgi trans cisterna"/>
    <property type="evidence" value="ECO:0007005"/>
    <property type="project" value="TAIR"/>
</dbReference>
<dbReference type="GO" id="GO:0005802">
    <property type="term" value="C:trans-Golgi network"/>
    <property type="evidence" value="ECO:0007005"/>
    <property type="project" value="TAIR"/>
</dbReference>
<dbReference type="GO" id="GO:0016192">
    <property type="term" value="P:vesicle-mediated transport"/>
    <property type="evidence" value="ECO:0000314"/>
    <property type="project" value="TAIR"/>
</dbReference>
<dbReference type="InterPro" id="IPR004895">
    <property type="entry name" value="Prenylated_rab_accept_PRA1"/>
</dbReference>
<dbReference type="PANTHER" id="PTHR19317">
    <property type="entry name" value="PRENYLATED RAB ACCEPTOR 1-RELATED"/>
    <property type="match status" value="1"/>
</dbReference>
<dbReference type="PANTHER" id="PTHR19317:SF0">
    <property type="entry name" value="PRENYLATED RAB ACCEPTOR PROTEIN 1"/>
    <property type="match status" value="1"/>
</dbReference>
<dbReference type="Pfam" id="PF03208">
    <property type="entry name" value="PRA1"/>
    <property type="match status" value="1"/>
</dbReference>
<sequence length="213" mass="23159">MSSSPAILPVTNQQAATQSQPPINSHAFRTFLSRLSSSLRESLSQRRPWLELVDRSSFARPDSLTDSFSRIRKNLAYFKVNYSAIVSLVLAFSLLSHPFSLLVLLSLLGSWMFLYLFRSSDQPLVLFGRSFSDRETLLGLVLTTIVVVFMTSVGSLLTSALTIGIAIVCLHGAFRVPDDLFLDEQEPANAGLLSFIGNSAATSAAASVVAGRV</sequence>
<accession>Q9SIY7</accession>
<accession>Q680Y9</accession>
<feature type="chain" id="PRO_0000352251" description="PRA1 family protein B2">
    <location>
        <begin position="1"/>
        <end position="213"/>
    </location>
</feature>
<feature type="transmembrane region" description="Helical" evidence="2">
    <location>
        <begin position="75"/>
        <end position="94"/>
    </location>
</feature>
<feature type="transmembrane region" description="Helical" evidence="2">
    <location>
        <begin position="98"/>
        <end position="117"/>
    </location>
</feature>
<feature type="transmembrane region" description="Helical" evidence="2">
    <location>
        <begin position="137"/>
        <end position="157"/>
    </location>
</feature>
<feature type="transmembrane region" description="Helical" evidence="2">
    <location>
        <begin position="161"/>
        <end position="181"/>
    </location>
</feature>
<feature type="transmembrane region" description="Helical" evidence="2">
    <location>
        <begin position="190"/>
        <end position="210"/>
    </location>
</feature>
<feature type="region of interest" description="Disordered" evidence="3">
    <location>
        <begin position="1"/>
        <end position="21"/>
    </location>
</feature>
<proteinExistence type="evidence at protein level"/>
<evidence type="ECO:0000250" key="1"/>
<evidence type="ECO:0000255" key="2"/>
<evidence type="ECO:0000256" key="3">
    <source>
        <dbReference type="SAM" id="MobiDB-lite"/>
    </source>
</evidence>
<evidence type="ECO:0000269" key="4">
    <source>
    </source>
</evidence>
<evidence type="ECO:0000305" key="5"/>
<reference key="1">
    <citation type="journal article" date="1999" name="Nature">
        <title>Sequence and analysis of chromosome 2 of the plant Arabidopsis thaliana.</title>
        <authorList>
            <person name="Lin X."/>
            <person name="Kaul S."/>
            <person name="Rounsley S.D."/>
            <person name="Shea T.P."/>
            <person name="Benito M.-I."/>
            <person name="Town C.D."/>
            <person name="Fujii C.Y."/>
            <person name="Mason T.M."/>
            <person name="Bowman C.L."/>
            <person name="Barnstead M.E."/>
            <person name="Feldblyum T.V."/>
            <person name="Buell C.R."/>
            <person name="Ketchum K.A."/>
            <person name="Lee J.J."/>
            <person name="Ronning C.M."/>
            <person name="Koo H.L."/>
            <person name="Moffat K.S."/>
            <person name="Cronin L.A."/>
            <person name="Shen M."/>
            <person name="Pai G."/>
            <person name="Van Aken S."/>
            <person name="Umayam L."/>
            <person name="Tallon L.J."/>
            <person name="Gill J.E."/>
            <person name="Adams M.D."/>
            <person name="Carrera A.J."/>
            <person name="Creasy T.H."/>
            <person name="Goodman H.M."/>
            <person name="Somerville C.R."/>
            <person name="Copenhaver G.P."/>
            <person name="Preuss D."/>
            <person name="Nierman W.C."/>
            <person name="White O."/>
            <person name="Eisen J.A."/>
            <person name="Salzberg S.L."/>
            <person name="Fraser C.M."/>
            <person name="Venter J.C."/>
        </authorList>
    </citation>
    <scope>NUCLEOTIDE SEQUENCE [LARGE SCALE GENOMIC DNA]</scope>
    <source>
        <strain>cv. Columbia</strain>
    </source>
</reference>
<reference key="2">
    <citation type="journal article" date="2017" name="Plant J.">
        <title>Araport11: a complete reannotation of the Arabidopsis thaliana reference genome.</title>
        <authorList>
            <person name="Cheng C.Y."/>
            <person name="Krishnakumar V."/>
            <person name="Chan A.P."/>
            <person name="Thibaud-Nissen F."/>
            <person name="Schobel S."/>
            <person name="Town C.D."/>
        </authorList>
    </citation>
    <scope>GENOME REANNOTATION</scope>
    <source>
        <strain>cv. Columbia</strain>
    </source>
</reference>
<reference key="3">
    <citation type="submission" date="2003-10" db="EMBL/GenBank/DDBJ databases">
        <title>Arabidopsis ORF clones.</title>
        <authorList>
            <person name="Cheuk R.F."/>
            <person name="Chen H."/>
            <person name="Kim C.J."/>
            <person name="Shinn P."/>
            <person name="Carninci P."/>
            <person name="Hayashizaki Y."/>
            <person name="Ishida J."/>
            <person name="Kamiya A."/>
            <person name="Kawai J."/>
            <person name="Narusaka M."/>
            <person name="Sakurai T."/>
            <person name="Satou M."/>
            <person name="Seki M."/>
            <person name="Shinozaki K."/>
            <person name="Ecker J.R."/>
        </authorList>
    </citation>
    <scope>NUCLEOTIDE SEQUENCE [LARGE SCALE MRNA]</scope>
    <source>
        <strain>cv. Columbia</strain>
    </source>
</reference>
<reference key="4">
    <citation type="submission" date="2004-09" db="EMBL/GenBank/DDBJ databases">
        <title>Large-scale analysis of RIKEN Arabidopsis full-length (RAFL) cDNAs.</title>
        <authorList>
            <person name="Totoki Y."/>
            <person name="Seki M."/>
            <person name="Ishida J."/>
            <person name="Nakajima M."/>
            <person name="Enju A."/>
            <person name="Kamiya A."/>
            <person name="Narusaka M."/>
            <person name="Shin-i T."/>
            <person name="Nakagawa M."/>
            <person name="Sakamoto N."/>
            <person name="Oishi K."/>
            <person name="Kohara Y."/>
            <person name="Kobayashi M."/>
            <person name="Toyoda A."/>
            <person name="Sakaki Y."/>
            <person name="Sakurai T."/>
            <person name="Iida K."/>
            <person name="Akiyama K."/>
            <person name="Satou M."/>
            <person name="Toyoda T."/>
            <person name="Konagaya A."/>
            <person name="Carninci P."/>
            <person name="Kawai J."/>
            <person name="Hayashizaki Y."/>
            <person name="Shinozaki K."/>
        </authorList>
    </citation>
    <scope>NUCLEOTIDE SEQUENCE [LARGE SCALE MRNA]</scope>
    <source>
        <strain>cv. Columbia</strain>
    </source>
</reference>
<reference key="5">
    <citation type="journal article" date="2008" name="Plant Physiol.">
        <title>The PRA1 gene family in Arabidopsis.</title>
        <authorList>
            <person name="Alvim Kamei C.L."/>
            <person name="Boruc J."/>
            <person name="Vandepoele K."/>
            <person name="Van den Daele H."/>
            <person name="Maes S."/>
            <person name="Russinova E."/>
            <person name="Inze D."/>
            <person name="de Veylder L."/>
        </authorList>
    </citation>
    <scope>SUBCELLULAR LOCATION</scope>
    <scope>INTERACTION WITH PRA1B1; PRA1B3; PRA1B4; PRA1B5; PRA1B6 AND PRA1E</scope>
    <scope>GENE FAMILY</scope>
    <scope>NOMENCLATURE</scope>
</reference>